<gene>
    <name evidence="2" type="primary">rplK</name>
    <name type="ordered locus">SA0495</name>
</gene>
<evidence type="ECO:0000250" key="1"/>
<evidence type="ECO:0000255" key="2">
    <source>
        <dbReference type="HAMAP-Rule" id="MF_00736"/>
    </source>
</evidence>
<evidence type="ECO:0000305" key="3"/>
<organism>
    <name type="scientific">Staphylococcus aureus (strain N315)</name>
    <dbReference type="NCBI Taxonomy" id="158879"/>
    <lineage>
        <taxon>Bacteria</taxon>
        <taxon>Bacillati</taxon>
        <taxon>Bacillota</taxon>
        <taxon>Bacilli</taxon>
        <taxon>Bacillales</taxon>
        <taxon>Staphylococcaceae</taxon>
        <taxon>Staphylococcus</taxon>
    </lineage>
</organism>
<keyword id="KW-0488">Methylation</keyword>
<keyword id="KW-0687">Ribonucleoprotein</keyword>
<keyword id="KW-0689">Ribosomal protein</keyword>
<keyword id="KW-0694">RNA-binding</keyword>
<keyword id="KW-0699">rRNA-binding</keyword>
<comment type="function">
    <text evidence="2">Forms part of the ribosomal stalk which helps the ribosome interact with GTP-bound translation factors.</text>
</comment>
<comment type="subunit">
    <text evidence="2">Part of the ribosomal stalk of the 50S ribosomal subunit. Interacts with L10 and the large rRNA to form the base of the stalk. L10 forms an elongated spine to which L12 dimers bind in a sequential fashion forming a multimeric L10(L12)X complex.</text>
</comment>
<comment type="PTM">
    <text evidence="2">One or more lysine residues are methylated.</text>
</comment>
<comment type="similarity">
    <text evidence="2">Belongs to the universal ribosomal protein uL11 family.</text>
</comment>
<accession>P0A0F2</accession>
<accession>O06443</accession>
<proteinExistence type="evidence at protein level"/>
<feature type="initiator methionine" description="Removed" evidence="1">
    <location>
        <position position="1"/>
    </location>
</feature>
<feature type="chain" id="PRO_0000104362" description="Large ribosomal subunit protein uL11">
    <location>
        <begin position="2"/>
        <end position="140"/>
    </location>
</feature>
<reference key="1">
    <citation type="journal article" date="2001" name="Lancet">
        <title>Whole genome sequencing of meticillin-resistant Staphylococcus aureus.</title>
        <authorList>
            <person name="Kuroda M."/>
            <person name="Ohta T."/>
            <person name="Uchiyama I."/>
            <person name="Baba T."/>
            <person name="Yuzawa H."/>
            <person name="Kobayashi I."/>
            <person name="Cui L."/>
            <person name="Oguchi A."/>
            <person name="Aoki K."/>
            <person name="Nagai Y."/>
            <person name="Lian J.-Q."/>
            <person name="Ito T."/>
            <person name="Kanamori M."/>
            <person name="Matsumaru H."/>
            <person name="Maruyama A."/>
            <person name="Murakami H."/>
            <person name="Hosoyama A."/>
            <person name="Mizutani-Ui Y."/>
            <person name="Takahashi N.K."/>
            <person name="Sawano T."/>
            <person name="Inoue R."/>
            <person name="Kaito C."/>
            <person name="Sekimizu K."/>
            <person name="Hirakawa H."/>
            <person name="Kuhara S."/>
            <person name="Goto S."/>
            <person name="Yabuzaki J."/>
            <person name="Kanehisa M."/>
            <person name="Yamashita A."/>
            <person name="Oshima K."/>
            <person name="Furuya K."/>
            <person name="Yoshino C."/>
            <person name="Shiba T."/>
            <person name="Hattori M."/>
            <person name="Ogasawara N."/>
            <person name="Hayashi H."/>
            <person name="Hiramatsu K."/>
        </authorList>
    </citation>
    <scope>NUCLEOTIDE SEQUENCE [LARGE SCALE GENOMIC DNA]</scope>
    <source>
        <strain>N315</strain>
    </source>
</reference>
<reference key="2">
    <citation type="submission" date="2007-10" db="UniProtKB">
        <title>Shotgun proteomic analysis of total and membrane protein extracts of S. aureus strain N315.</title>
        <authorList>
            <person name="Vaezzadeh A.R."/>
            <person name="Deshusses J."/>
            <person name="Lescuyer P."/>
            <person name="Hochstrasser D.F."/>
        </authorList>
    </citation>
    <scope>IDENTIFICATION BY MASS SPECTROMETRY [LARGE SCALE ANALYSIS]</scope>
    <source>
        <strain>N315</strain>
    </source>
</reference>
<sequence length="140" mass="14874">MAKKVDKVVKLQIPAGKANPAPPVGPALGQAGVNIMGFCKEFNARTQDQAGLIIPVEISVYEDRSFTFITKTPPAPVLLKKAAGIEKGSGEPNKTKVATVTKDQVREIANSKMQDLNAADEEAAMRIIEGTARSMGIVVE</sequence>
<protein>
    <recommendedName>
        <fullName evidence="2">Large ribosomal subunit protein uL11</fullName>
    </recommendedName>
    <alternativeName>
        <fullName evidence="3">50S ribosomal protein L11</fullName>
    </alternativeName>
</protein>
<name>RL11_STAAN</name>
<dbReference type="EMBL" id="BA000018">
    <property type="protein sequence ID" value="BAB41726.1"/>
    <property type="molecule type" value="Genomic_DNA"/>
</dbReference>
<dbReference type="PIR" id="C89821">
    <property type="entry name" value="C89821"/>
</dbReference>
<dbReference type="RefSeq" id="WP_001085792.1">
    <property type="nucleotide sequence ID" value="NC_002745.2"/>
</dbReference>
<dbReference type="SMR" id="P0A0F2"/>
<dbReference type="EnsemblBacteria" id="BAB41726">
    <property type="protein sequence ID" value="BAB41726"/>
    <property type="gene ID" value="BAB41726"/>
</dbReference>
<dbReference type="GeneID" id="98344871"/>
<dbReference type="KEGG" id="sau:SA0495"/>
<dbReference type="HOGENOM" id="CLU_074237_2_1_9"/>
<dbReference type="GO" id="GO:0022625">
    <property type="term" value="C:cytosolic large ribosomal subunit"/>
    <property type="evidence" value="ECO:0007669"/>
    <property type="project" value="TreeGrafter"/>
</dbReference>
<dbReference type="GO" id="GO:0070180">
    <property type="term" value="F:large ribosomal subunit rRNA binding"/>
    <property type="evidence" value="ECO:0007669"/>
    <property type="project" value="UniProtKB-UniRule"/>
</dbReference>
<dbReference type="GO" id="GO:0003735">
    <property type="term" value="F:structural constituent of ribosome"/>
    <property type="evidence" value="ECO:0007669"/>
    <property type="project" value="InterPro"/>
</dbReference>
<dbReference type="GO" id="GO:0006412">
    <property type="term" value="P:translation"/>
    <property type="evidence" value="ECO:0007669"/>
    <property type="project" value="UniProtKB-UniRule"/>
</dbReference>
<dbReference type="CDD" id="cd00349">
    <property type="entry name" value="Ribosomal_L11"/>
    <property type="match status" value="1"/>
</dbReference>
<dbReference type="FunFam" id="1.10.10.250:FF:000001">
    <property type="entry name" value="50S ribosomal protein L11"/>
    <property type="match status" value="1"/>
</dbReference>
<dbReference type="FunFam" id="3.30.1550.10:FF:000001">
    <property type="entry name" value="50S ribosomal protein L11"/>
    <property type="match status" value="1"/>
</dbReference>
<dbReference type="Gene3D" id="1.10.10.250">
    <property type="entry name" value="Ribosomal protein L11, C-terminal domain"/>
    <property type="match status" value="1"/>
</dbReference>
<dbReference type="Gene3D" id="3.30.1550.10">
    <property type="entry name" value="Ribosomal protein L11/L12, N-terminal domain"/>
    <property type="match status" value="1"/>
</dbReference>
<dbReference type="HAMAP" id="MF_00736">
    <property type="entry name" value="Ribosomal_uL11"/>
    <property type="match status" value="1"/>
</dbReference>
<dbReference type="InterPro" id="IPR000911">
    <property type="entry name" value="Ribosomal_uL11"/>
</dbReference>
<dbReference type="InterPro" id="IPR006519">
    <property type="entry name" value="Ribosomal_uL11_bac-typ"/>
</dbReference>
<dbReference type="InterPro" id="IPR020783">
    <property type="entry name" value="Ribosomal_uL11_C"/>
</dbReference>
<dbReference type="InterPro" id="IPR036769">
    <property type="entry name" value="Ribosomal_uL11_C_sf"/>
</dbReference>
<dbReference type="InterPro" id="IPR020785">
    <property type="entry name" value="Ribosomal_uL11_CS"/>
</dbReference>
<dbReference type="InterPro" id="IPR020784">
    <property type="entry name" value="Ribosomal_uL11_N"/>
</dbReference>
<dbReference type="InterPro" id="IPR036796">
    <property type="entry name" value="Ribosomal_uL11_N_sf"/>
</dbReference>
<dbReference type="NCBIfam" id="TIGR01632">
    <property type="entry name" value="L11_bact"/>
    <property type="match status" value="1"/>
</dbReference>
<dbReference type="PANTHER" id="PTHR11661">
    <property type="entry name" value="60S RIBOSOMAL PROTEIN L12"/>
    <property type="match status" value="1"/>
</dbReference>
<dbReference type="PANTHER" id="PTHR11661:SF1">
    <property type="entry name" value="LARGE RIBOSOMAL SUBUNIT PROTEIN UL11M"/>
    <property type="match status" value="1"/>
</dbReference>
<dbReference type="Pfam" id="PF00298">
    <property type="entry name" value="Ribosomal_L11"/>
    <property type="match status" value="1"/>
</dbReference>
<dbReference type="Pfam" id="PF03946">
    <property type="entry name" value="Ribosomal_L11_N"/>
    <property type="match status" value="1"/>
</dbReference>
<dbReference type="SMART" id="SM00649">
    <property type="entry name" value="RL11"/>
    <property type="match status" value="1"/>
</dbReference>
<dbReference type="SUPFAM" id="SSF54747">
    <property type="entry name" value="Ribosomal L11/L12e N-terminal domain"/>
    <property type="match status" value="1"/>
</dbReference>
<dbReference type="SUPFAM" id="SSF46906">
    <property type="entry name" value="Ribosomal protein L11, C-terminal domain"/>
    <property type="match status" value="1"/>
</dbReference>
<dbReference type="PROSITE" id="PS00359">
    <property type="entry name" value="RIBOSOMAL_L11"/>
    <property type="match status" value="1"/>
</dbReference>